<dbReference type="EC" id="2.5.1.6" evidence="1"/>
<dbReference type="EMBL" id="CP001048">
    <property type="protein sequence ID" value="ACC90290.1"/>
    <property type="molecule type" value="Genomic_DNA"/>
</dbReference>
<dbReference type="RefSeq" id="WP_002209971.1">
    <property type="nucleotide sequence ID" value="NZ_CP009780.1"/>
</dbReference>
<dbReference type="SMR" id="B2K0S7"/>
<dbReference type="GeneID" id="57973710"/>
<dbReference type="KEGG" id="ypb:YPTS_3335"/>
<dbReference type="PATRIC" id="fig|502801.10.peg.2776"/>
<dbReference type="UniPathway" id="UPA00315">
    <property type="reaction ID" value="UER00080"/>
</dbReference>
<dbReference type="GO" id="GO:0005737">
    <property type="term" value="C:cytoplasm"/>
    <property type="evidence" value="ECO:0007669"/>
    <property type="project" value="UniProtKB-SubCell"/>
</dbReference>
<dbReference type="GO" id="GO:0005524">
    <property type="term" value="F:ATP binding"/>
    <property type="evidence" value="ECO:0007669"/>
    <property type="project" value="UniProtKB-UniRule"/>
</dbReference>
<dbReference type="GO" id="GO:0000287">
    <property type="term" value="F:magnesium ion binding"/>
    <property type="evidence" value="ECO:0007669"/>
    <property type="project" value="UniProtKB-UniRule"/>
</dbReference>
<dbReference type="GO" id="GO:0004478">
    <property type="term" value="F:methionine adenosyltransferase activity"/>
    <property type="evidence" value="ECO:0007669"/>
    <property type="project" value="UniProtKB-UniRule"/>
</dbReference>
<dbReference type="GO" id="GO:0006730">
    <property type="term" value="P:one-carbon metabolic process"/>
    <property type="evidence" value="ECO:0007669"/>
    <property type="project" value="UniProtKB-KW"/>
</dbReference>
<dbReference type="GO" id="GO:0006556">
    <property type="term" value="P:S-adenosylmethionine biosynthetic process"/>
    <property type="evidence" value="ECO:0007669"/>
    <property type="project" value="UniProtKB-UniRule"/>
</dbReference>
<dbReference type="CDD" id="cd18079">
    <property type="entry name" value="S-AdoMet_synt"/>
    <property type="match status" value="1"/>
</dbReference>
<dbReference type="FunFam" id="3.30.300.10:FF:000001">
    <property type="entry name" value="S-adenosylmethionine synthase"/>
    <property type="match status" value="1"/>
</dbReference>
<dbReference type="FunFam" id="3.30.300.10:FF:000003">
    <property type="entry name" value="S-adenosylmethionine synthase"/>
    <property type="match status" value="1"/>
</dbReference>
<dbReference type="Gene3D" id="3.30.300.10">
    <property type="match status" value="3"/>
</dbReference>
<dbReference type="HAMAP" id="MF_00086">
    <property type="entry name" value="S_AdoMet_synth1"/>
    <property type="match status" value="1"/>
</dbReference>
<dbReference type="InterPro" id="IPR022631">
    <property type="entry name" value="ADOMET_SYNTHASE_CS"/>
</dbReference>
<dbReference type="InterPro" id="IPR022630">
    <property type="entry name" value="S-AdoMet_synt_C"/>
</dbReference>
<dbReference type="InterPro" id="IPR022629">
    <property type="entry name" value="S-AdoMet_synt_central"/>
</dbReference>
<dbReference type="InterPro" id="IPR022628">
    <property type="entry name" value="S-AdoMet_synt_N"/>
</dbReference>
<dbReference type="InterPro" id="IPR002133">
    <property type="entry name" value="S-AdoMet_synthetase"/>
</dbReference>
<dbReference type="InterPro" id="IPR022636">
    <property type="entry name" value="S-AdoMet_synthetase_sfam"/>
</dbReference>
<dbReference type="NCBIfam" id="TIGR01034">
    <property type="entry name" value="metK"/>
    <property type="match status" value="1"/>
</dbReference>
<dbReference type="PANTHER" id="PTHR11964">
    <property type="entry name" value="S-ADENOSYLMETHIONINE SYNTHETASE"/>
    <property type="match status" value="1"/>
</dbReference>
<dbReference type="Pfam" id="PF02773">
    <property type="entry name" value="S-AdoMet_synt_C"/>
    <property type="match status" value="1"/>
</dbReference>
<dbReference type="Pfam" id="PF02772">
    <property type="entry name" value="S-AdoMet_synt_M"/>
    <property type="match status" value="1"/>
</dbReference>
<dbReference type="Pfam" id="PF00438">
    <property type="entry name" value="S-AdoMet_synt_N"/>
    <property type="match status" value="1"/>
</dbReference>
<dbReference type="PIRSF" id="PIRSF000497">
    <property type="entry name" value="MAT"/>
    <property type="match status" value="1"/>
</dbReference>
<dbReference type="SUPFAM" id="SSF55973">
    <property type="entry name" value="S-adenosylmethionine synthetase"/>
    <property type="match status" value="3"/>
</dbReference>
<dbReference type="PROSITE" id="PS00376">
    <property type="entry name" value="ADOMET_SYNTHASE_1"/>
    <property type="match status" value="1"/>
</dbReference>
<dbReference type="PROSITE" id="PS00377">
    <property type="entry name" value="ADOMET_SYNTHASE_2"/>
    <property type="match status" value="1"/>
</dbReference>
<protein>
    <recommendedName>
        <fullName evidence="1">S-adenosylmethionine synthase</fullName>
        <shortName evidence="1">AdoMet synthase</shortName>
        <ecNumber evidence="1">2.5.1.6</ecNumber>
    </recommendedName>
    <alternativeName>
        <fullName evidence="1">MAT</fullName>
    </alternativeName>
    <alternativeName>
        <fullName evidence="1">Methionine adenosyltransferase</fullName>
    </alternativeName>
</protein>
<name>METK_YERPB</name>
<comment type="function">
    <text evidence="1">Catalyzes the formation of S-adenosylmethionine (AdoMet) from methionine and ATP. The overall synthetic reaction is composed of two sequential steps, AdoMet formation and the subsequent tripolyphosphate hydrolysis which occurs prior to release of AdoMet from the enzyme.</text>
</comment>
<comment type="catalytic activity">
    <reaction evidence="1">
        <text>L-methionine + ATP + H2O = S-adenosyl-L-methionine + phosphate + diphosphate</text>
        <dbReference type="Rhea" id="RHEA:21080"/>
        <dbReference type="ChEBI" id="CHEBI:15377"/>
        <dbReference type="ChEBI" id="CHEBI:30616"/>
        <dbReference type="ChEBI" id="CHEBI:33019"/>
        <dbReference type="ChEBI" id="CHEBI:43474"/>
        <dbReference type="ChEBI" id="CHEBI:57844"/>
        <dbReference type="ChEBI" id="CHEBI:59789"/>
        <dbReference type="EC" id="2.5.1.6"/>
    </reaction>
</comment>
<comment type="cofactor">
    <cofactor evidence="1">
        <name>Mg(2+)</name>
        <dbReference type="ChEBI" id="CHEBI:18420"/>
    </cofactor>
    <text evidence="1">Binds 2 divalent ions per subunit.</text>
</comment>
<comment type="cofactor">
    <cofactor evidence="1">
        <name>K(+)</name>
        <dbReference type="ChEBI" id="CHEBI:29103"/>
    </cofactor>
    <text evidence="1">Binds 1 potassium ion per subunit.</text>
</comment>
<comment type="pathway">
    <text evidence="1">Amino-acid biosynthesis; S-adenosyl-L-methionine biosynthesis; S-adenosyl-L-methionine from L-methionine: step 1/1.</text>
</comment>
<comment type="subunit">
    <text evidence="1">Homotetramer; dimer of dimers.</text>
</comment>
<comment type="subcellular location">
    <subcellularLocation>
        <location evidence="1">Cytoplasm</location>
    </subcellularLocation>
</comment>
<comment type="similarity">
    <text evidence="1">Belongs to the AdoMet synthase family.</text>
</comment>
<proteinExistence type="inferred from homology"/>
<sequence length="384" mass="42020">MAKHLFTSESVSEGHPDKIADQISDAVLDAILEQDPKARVACETYVKTGMVLVGGEVTTNAWVDIEEITRRTIREIGYVHSDMGFDANSCAVLSAIGKQSPDINQGVDRENPLEQGAGDQGLMFGYATNETSVLMPAPITYAHRLVERQAEVRKNGALPWLRPDAKSQVTFQYDDGKIVGIDAVVLSTQHSEDINQKDLHEAVMEEIIKPVLPAEWITAHTKYFINPTGRFVIGGPMGDCGLTGRKIIVDTYGGMARHGGGAFSGKDPSKVDRSAAYAARYVAKNIVAAGLADRCEIQVSYAIGVAEPTSIMVEAFGTEKIPADQLTLLVREFFDLRPYGLIKMLDLLHPIYRETAAYGHFGREHFPWEKTDKAALLRDAAGLK</sequence>
<organism>
    <name type="scientific">Yersinia pseudotuberculosis serotype IB (strain PB1/+)</name>
    <dbReference type="NCBI Taxonomy" id="502801"/>
    <lineage>
        <taxon>Bacteria</taxon>
        <taxon>Pseudomonadati</taxon>
        <taxon>Pseudomonadota</taxon>
        <taxon>Gammaproteobacteria</taxon>
        <taxon>Enterobacterales</taxon>
        <taxon>Yersiniaceae</taxon>
        <taxon>Yersinia</taxon>
    </lineage>
</organism>
<evidence type="ECO:0000255" key="1">
    <source>
        <dbReference type="HAMAP-Rule" id="MF_00086"/>
    </source>
</evidence>
<reference key="1">
    <citation type="submission" date="2008-04" db="EMBL/GenBank/DDBJ databases">
        <title>Complete sequence of Yersinia pseudotuberculosis PB1/+.</title>
        <authorList>
            <person name="Copeland A."/>
            <person name="Lucas S."/>
            <person name="Lapidus A."/>
            <person name="Glavina del Rio T."/>
            <person name="Dalin E."/>
            <person name="Tice H."/>
            <person name="Bruce D."/>
            <person name="Goodwin L."/>
            <person name="Pitluck S."/>
            <person name="Munk A.C."/>
            <person name="Brettin T."/>
            <person name="Detter J.C."/>
            <person name="Han C."/>
            <person name="Tapia R."/>
            <person name="Schmutz J."/>
            <person name="Larimer F."/>
            <person name="Land M."/>
            <person name="Hauser L."/>
            <person name="Challacombe J.F."/>
            <person name="Green L."/>
            <person name="Lindler L.E."/>
            <person name="Nikolich M.P."/>
            <person name="Richardson P."/>
        </authorList>
    </citation>
    <scope>NUCLEOTIDE SEQUENCE [LARGE SCALE GENOMIC DNA]</scope>
    <source>
        <strain>PB1/+</strain>
    </source>
</reference>
<accession>B2K0S7</accession>
<keyword id="KW-0067">ATP-binding</keyword>
<keyword id="KW-0963">Cytoplasm</keyword>
<keyword id="KW-0460">Magnesium</keyword>
<keyword id="KW-0479">Metal-binding</keyword>
<keyword id="KW-0547">Nucleotide-binding</keyword>
<keyword id="KW-0554">One-carbon metabolism</keyword>
<keyword id="KW-0630">Potassium</keyword>
<keyword id="KW-0808">Transferase</keyword>
<gene>
    <name evidence="1" type="primary">metK</name>
    <name type="ordered locus">YPTS_3335</name>
</gene>
<feature type="chain" id="PRO_1000093104" description="S-adenosylmethionine synthase">
    <location>
        <begin position="1"/>
        <end position="384"/>
    </location>
</feature>
<feature type="region of interest" description="Flexible loop" evidence="1">
    <location>
        <begin position="99"/>
        <end position="109"/>
    </location>
</feature>
<feature type="binding site" description="in other chain" evidence="1">
    <location>
        <position position="15"/>
    </location>
    <ligand>
        <name>ATP</name>
        <dbReference type="ChEBI" id="CHEBI:30616"/>
        <note>ligand shared between two neighboring subunits</note>
    </ligand>
</feature>
<feature type="binding site" evidence="1">
    <location>
        <position position="17"/>
    </location>
    <ligand>
        <name>Mg(2+)</name>
        <dbReference type="ChEBI" id="CHEBI:18420"/>
    </ligand>
</feature>
<feature type="binding site" evidence="1">
    <location>
        <position position="43"/>
    </location>
    <ligand>
        <name>K(+)</name>
        <dbReference type="ChEBI" id="CHEBI:29103"/>
    </ligand>
</feature>
<feature type="binding site" description="in other chain" evidence="1">
    <location>
        <position position="56"/>
    </location>
    <ligand>
        <name>L-methionine</name>
        <dbReference type="ChEBI" id="CHEBI:57844"/>
        <note>ligand shared between two neighboring subunits</note>
    </ligand>
</feature>
<feature type="binding site" description="in other chain" evidence="1">
    <location>
        <position position="99"/>
    </location>
    <ligand>
        <name>L-methionine</name>
        <dbReference type="ChEBI" id="CHEBI:57844"/>
        <note>ligand shared between two neighboring subunits</note>
    </ligand>
</feature>
<feature type="binding site" description="in other chain" evidence="1">
    <location>
        <begin position="164"/>
        <end position="166"/>
    </location>
    <ligand>
        <name>ATP</name>
        <dbReference type="ChEBI" id="CHEBI:30616"/>
        <note>ligand shared between two neighboring subunits</note>
    </ligand>
</feature>
<feature type="binding site" description="in other chain" evidence="1">
    <location>
        <begin position="230"/>
        <end position="231"/>
    </location>
    <ligand>
        <name>ATP</name>
        <dbReference type="ChEBI" id="CHEBI:30616"/>
        <note>ligand shared between two neighboring subunits</note>
    </ligand>
</feature>
<feature type="binding site" evidence="1">
    <location>
        <position position="239"/>
    </location>
    <ligand>
        <name>ATP</name>
        <dbReference type="ChEBI" id="CHEBI:30616"/>
        <note>ligand shared between two neighboring subunits</note>
    </ligand>
</feature>
<feature type="binding site" evidence="1">
    <location>
        <position position="239"/>
    </location>
    <ligand>
        <name>L-methionine</name>
        <dbReference type="ChEBI" id="CHEBI:57844"/>
        <note>ligand shared between two neighboring subunits</note>
    </ligand>
</feature>
<feature type="binding site" description="in other chain" evidence="1">
    <location>
        <begin position="245"/>
        <end position="246"/>
    </location>
    <ligand>
        <name>ATP</name>
        <dbReference type="ChEBI" id="CHEBI:30616"/>
        <note>ligand shared between two neighboring subunits</note>
    </ligand>
</feature>
<feature type="binding site" evidence="1">
    <location>
        <position position="262"/>
    </location>
    <ligand>
        <name>ATP</name>
        <dbReference type="ChEBI" id="CHEBI:30616"/>
        <note>ligand shared between two neighboring subunits</note>
    </ligand>
</feature>
<feature type="binding site" evidence="1">
    <location>
        <position position="266"/>
    </location>
    <ligand>
        <name>ATP</name>
        <dbReference type="ChEBI" id="CHEBI:30616"/>
        <note>ligand shared between two neighboring subunits</note>
    </ligand>
</feature>
<feature type="binding site" description="in other chain" evidence="1">
    <location>
        <position position="270"/>
    </location>
    <ligand>
        <name>L-methionine</name>
        <dbReference type="ChEBI" id="CHEBI:57844"/>
        <note>ligand shared between two neighboring subunits</note>
    </ligand>
</feature>